<name>YCIB_RICFE</name>
<protein>
    <recommendedName>
        <fullName evidence="1">Inner membrane-spanning protein YciB</fullName>
    </recommendedName>
</protein>
<organism>
    <name type="scientific">Rickettsia felis (strain ATCC VR-1525 / URRWXCal2)</name>
    <name type="common">Rickettsia azadi</name>
    <dbReference type="NCBI Taxonomy" id="315456"/>
    <lineage>
        <taxon>Bacteria</taxon>
        <taxon>Pseudomonadati</taxon>
        <taxon>Pseudomonadota</taxon>
        <taxon>Alphaproteobacteria</taxon>
        <taxon>Rickettsiales</taxon>
        <taxon>Rickettsiaceae</taxon>
        <taxon>Rickettsieae</taxon>
        <taxon>Rickettsia</taxon>
        <taxon>spotted fever group</taxon>
    </lineage>
</organism>
<keyword id="KW-0997">Cell inner membrane</keyword>
<keyword id="KW-1003">Cell membrane</keyword>
<keyword id="KW-0472">Membrane</keyword>
<keyword id="KW-0812">Transmembrane</keyword>
<keyword id="KW-1133">Transmembrane helix</keyword>
<evidence type="ECO:0000255" key="1">
    <source>
        <dbReference type="HAMAP-Rule" id="MF_00189"/>
    </source>
</evidence>
<accession>Q4ULV9</accession>
<gene>
    <name evidence="1" type="primary">yciB</name>
    <name type="ordered locus">RF_0613</name>
</gene>
<comment type="function">
    <text evidence="1">Plays a role in cell envelope biogenesis, maintenance of cell envelope integrity and membrane homeostasis.</text>
</comment>
<comment type="subcellular location">
    <subcellularLocation>
        <location evidence="1">Cell inner membrane</location>
        <topology evidence="1">Multi-pass membrane protein</topology>
    </subcellularLocation>
</comment>
<comment type="similarity">
    <text evidence="1">Belongs to the YciB family.</text>
</comment>
<dbReference type="EMBL" id="CP000053">
    <property type="protein sequence ID" value="AAY61464.1"/>
    <property type="molecule type" value="Genomic_DNA"/>
</dbReference>
<dbReference type="SMR" id="Q4ULV9"/>
<dbReference type="STRING" id="315456.RF_0613"/>
<dbReference type="KEGG" id="rfe:RF_0613"/>
<dbReference type="eggNOG" id="COG2917">
    <property type="taxonomic scope" value="Bacteria"/>
</dbReference>
<dbReference type="HOGENOM" id="CLU_089554_1_1_5"/>
<dbReference type="OrthoDB" id="9788219at2"/>
<dbReference type="Proteomes" id="UP000008548">
    <property type="component" value="Chromosome"/>
</dbReference>
<dbReference type="GO" id="GO:0005886">
    <property type="term" value="C:plasma membrane"/>
    <property type="evidence" value="ECO:0007669"/>
    <property type="project" value="UniProtKB-SubCell"/>
</dbReference>
<dbReference type="HAMAP" id="MF_00189">
    <property type="entry name" value="YciB"/>
    <property type="match status" value="1"/>
</dbReference>
<dbReference type="InterPro" id="IPR006008">
    <property type="entry name" value="YciB"/>
</dbReference>
<dbReference type="NCBIfam" id="TIGR00997">
    <property type="entry name" value="ispZ"/>
    <property type="match status" value="1"/>
</dbReference>
<dbReference type="NCBIfam" id="NF001323">
    <property type="entry name" value="PRK00259.1-1"/>
    <property type="match status" value="1"/>
</dbReference>
<dbReference type="PANTHER" id="PTHR36917:SF1">
    <property type="entry name" value="INNER MEMBRANE-SPANNING PROTEIN YCIB"/>
    <property type="match status" value="1"/>
</dbReference>
<dbReference type="PANTHER" id="PTHR36917">
    <property type="entry name" value="INTRACELLULAR SEPTATION PROTEIN A-RELATED"/>
    <property type="match status" value="1"/>
</dbReference>
<dbReference type="Pfam" id="PF04279">
    <property type="entry name" value="IspA"/>
    <property type="match status" value="1"/>
</dbReference>
<feature type="chain" id="PRO_0000278051" description="Inner membrane-spanning protein YciB">
    <location>
        <begin position="1"/>
        <end position="180"/>
    </location>
</feature>
<feature type="transmembrane region" description="Helical" evidence="1">
    <location>
        <begin position="25"/>
        <end position="45"/>
    </location>
</feature>
<feature type="transmembrane region" description="Helical" evidence="1">
    <location>
        <begin position="49"/>
        <end position="69"/>
    </location>
</feature>
<feature type="transmembrane region" description="Helical" evidence="1">
    <location>
        <begin position="76"/>
        <end position="96"/>
    </location>
</feature>
<feature type="transmembrane region" description="Helical" evidence="1">
    <location>
        <begin position="118"/>
        <end position="138"/>
    </location>
</feature>
<feature type="transmembrane region" description="Helical" evidence="1">
    <location>
        <begin position="150"/>
        <end position="170"/>
    </location>
</feature>
<proteinExistence type="inferred from homology"/>
<sequence>MLKLLSEIGPVIAFFAGFFYGGGIQNATLYMLITSVICITLCYVIDKKVSKLSIISTTVLLVSGSITLISGDSMYIKIKPTILYVIFGIIFLMSGIRKNPFIKYALESIVRLKEESWIILSYRTAAFFFFMAVVNEIVWRNFSDETWVKFKVFGVIPVTFIFILLQLPLLLKNKLPDSKI</sequence>
<reference key="1">
    <citation type="journal article" date="2005" name="PLoS Biol.">
        <title>The genome sequence of Rickettsia felis identifies the first putative conjugative plasmid in an obligate intracellular parasite.</title>
        <authorList>
            <person name="Ogata H."/>
            <person name="Renesto P."/>
            <person name="Audic S."/>
            <person name="Robert C."/>
            <person name="Blanc G."/>
            <person name="Fournier P.-E."/>
            <person name="Parinello H."/>
            <person name="Claverie J.-M."/>
            <person name="Raoult D."/>
        </authorList>
    </citation>
    <scope>NUCLEOTIDE SEQUENCE [LARGE SCALE GENOMIC DNA]</scope>
    <source>
        <strain>ATCC VR-1525 / URRWXCal2</strain>
    </source>
</reference>